<proteinExistence type="evidence at transcript level"/>
<sequence length="164" mass="19775">MNNSLDYLAYPVIVSNHRQSTTFRKKLDFGHYILHKNRVQIVKPAVDTKPPMAHTHYILKLSKIQGEQKRIDKIEYENRQLCQKIANAYRGPAKVDCWNEYLSKSLNRESRNRELVRITMENQGILRRLSDRKPNYDRRSSEMDWQNSRRYIRNTTRYLLFQED</sequence>
<evidence type="ECO:0000255" key="1"/>
<evidence type="ECO:0000269" key="2">
    <source>
    </source>
</evidence>
<evidence type="ECO:0000305" key="3"/>
<organism>
    <name type="scientific">Mus musculus</name>
    <name type="common">Mouse</name>
    <dbReference type="NCBI Taxonomy" id="10090"/>
    <lineage>
        <taxon>Eukaryota</taxon>
        <taxon>Metazoa</taxon>
        <taxon>Chordata</taxon>
        <taxon>Craniata</taxon>
        <taxon>Vertebrata</taxon>
        <taxon>Euteleostomi</taxon>
        <taxon>Mammalia</taxon>
        <taxon>Eutheria</taxon>
        <taxon>Euarchontoglires</taxon>
        <taxon>Glires</taxon>
        <taxon>Rodentia</taxon>
        <taxon>Myomorpha</taxon>
        <taxon>Muroidea</taxon>
        <taxon>Muridae</taxon>
        <taxon>Murinae</taxon>
        <taxon>Mus</taxon>
        <taxon>Mus</taxon>
    </lineage>
</organism>
<feature type="chain" id="PRO_0000392550" description="Sperm axonemal maintenance protein CFAP97D1">
    <location>
        <begin position="1"/>
        <end position="164"/>
    </location>
</feature>
<feature type="coiled-coil region" evidence="1">
    <location>
        <begin position="61"/>
        <end position="88"/>
    </location>
</feature>
<gene>
    <name type="primary">Cfap97d1</name>
</gene>
<accession>Q9DAN9</accession>
<comment type="function">
    <text evidence="2">Required for male fertility through its role in axonemal doublet stabilization which is essential for sperm motility and fertilization.</text>
</comment>
<comment type="tissue specificity">
    <text evidence="2">Expressed exclusively in testis.</text>
</comment>
<comment type="developmental stage">
    <text evidence="2">Expression starts at postnatal day 20 and continues throughout adulthood.</text>
</comment>
<comment type="disruption phenotype">
    <text evidence="2">Male subfertility. Sperm show an impaired ability to penetrate the zona pellucida and abnormal motility characterized by frequent stalling in the anti-hook position with the flagellum and hook of the sperm head pointing in opposite directions. Sperm flagella lack outer microtubule doublet 4 in 63% of mutants while doublet 7 is missing in 14.8% of mutants. A small number of mutants have multiple doublets missing but these are relatively rare: the 4th and 7th doublets are missing in 1.6% of mutants; the 4th, 5th and 7th doublets are missing in 3.7%; the 4th, 5th and 6th doublets are missing in 1.23%; and the 4th, 5th, 6th and 7th doublets are missing in 1.23%.</text>
</comment>
<comment type="similarity">
    <text evidence="3">Belongs to the CFAP97 family.</text>
</comment>
<name>CF97D_MOUSE</name>
<keyword id="KW-0175">Coiled coil</keyword>
<keyword id="KW-1185">Reference proteome</keyword>
<dbReference type="EMBL" id="AK005669">
    <property type="protein sequence ID" value="BAB24178.1"/>
    <property type="molecule type" value="mRNA"/>
</dbReference>
<dbReference type="EMBL" id="AL591145">
    <property type="status" value="NOT_ANNOTATED_CDS"/>
    <property type="molecule type" value="Genomic_DNA"/>
</dbReference>
<dbReference type="EMBL" id="CH466558">
    <property type="protein sequence ID" value="EDL34076.1"/>
    <property type="molecule type" value="Genomic_DNA"/>
</dbReference>
<dbReference type="EMBL" id="BC116819">
    <property type="protein sequence ID" value="AAI16820.1"/>
    <property type="molecule type" value="mRNA"/>
</dbReference>
<dbReference type="EMBL" id="BC116821">
    <property type="protein sequence ID" value="AAI16822.1"/>
    <property type="molecule type" value="mRNA"/>
</dbReference>
<dbReference type="CCDS" id="CCDS48938.1"/>
<dbReference type="RefSeq" id="NP_083563.1">
    <property type="nucleotide sequence ID" value="NM_029287.1"/>
</dbReference>
<dbReference type="SMR" id="Q9DAN9"/>
<dbReference type="FunCoup" id="Q9DAN9">
    <property type="interactions" value="1"/>
</dbReference>
<dbReference type="STRING" id="10090.ENSMUSP00000010985"/>
<dbReference type="iPTMnet" id="Q9DAN9"/>
<dbReference type="PhosphoSitePlus" id="Q9DAN9"/>
<dbReference type="PaxDb" id="10090-ENSMUSP00000010985"/>
<dbReference type="Antibodypedia" id="29596">
    <property type="antibodies" value="16 antibodies from 9 providers"/>
</dbReference>
<dbReference type="Ensembl" id="ENSMUST00000010985.8">
    <property type="protein sequence ID" value="ENSMUSP00000010985.8"/>
    <property type="gene ID" value="ENSMUSG00000010841.14"/>
</dbReference>
<dbReference type="GeneID" id="75437"/>
<dbReference type="KEGG" id="mmu:75437"/>
<dbReference type="UCSC" id="uc007lqb.2">
    <property type="organism name" value="mouse"/>
</dbReference>
<dbReference type="AGR" id="MGI:1922687"/>
<dbReference type="CTD" id="284067"/>
<dbReference type="MGI" id="MGI:1922687">
    <property type="gene designation" value="Cfap97d1"/>
</dbReference>
<dbReference type="VEuPathDB" id="HostDB:ENSMUSG00000010841"/>
<dbReference type="eggNOG" id="ENOG502S44E">
    <property type="taxonomic scope" value="Eukaryota"/>
</dbReference>
<dbReference type="GeneTree" id="ENSGT00390000018148"/>
<dbReference type="HOGENOM" id="CLU_097298_2_0_1"/>
<dbReference type="InParanoid" id="Q9DAN9"/>
<dbReference type="OMA" id="DHVQWEE"/>
<dbReference type="OrthoDB" id="2163395at2759"/>
<dbReference type="PhylomeDB" id="Q9DAN9"/>
<dbReference type="TreeFam" id="TF325279"/>
<dbReference type="BioGRID-ORCS" id="75437">
    <property type="hits" value="5 hits in 77 CRISPR screens"/>
</dbReference>
<dbReference type="PRO" id="PR:Q9DAN9"/>
<dbReference type="Proteomes" id="UP000000589">
    <property type="component" value="Chromosome 11"/>
</dbReference>
<dbReference type="RNAct" id="Q9DAN9">
    <property type="molecule type" value="protein"/>
</dbReference>
<dbReference type="Bgee" id="ENSMUSG00000010841">
    <property type="expression patterns" value="Expressed in seminiferous tubule of testis and 29 other cell types or tissues"/>
</dbReference>
<dbReference type="ExpressionAtlas" id="Q9DAN9">
    <property type="expression patterns" value="baseline and differential"/>
</dbReference>
<dbReference type="GO" id="GO:0007288">
    <property type="term" value="P:sperm axoneme assembly"/>
    <property type="evidence" value="ECO:0000315"/>
    <property type="project" value="UniProtKB"/>
</dbReference>
<dbReference type="InterPro" id="IPR038792">
    <property type="entry name" value="CFAP97D1/2"/>
</dbReference>
<dbReference type="InterPro" id="IPR029488">
    <property type="entry name" value="Hmw/CFAP97"/>
</dbReference>
<dbReference type="PANTHER" id="PTHR33768">
    <property type="entry name" value="MIP11318P"/>
    <property type="match status" value="1"/>
</dbReference>
<dbReference type="PANTHER" id="PTHR33768:SF5">
    <property type="entry name" value="SPERM AXONEMAL MAINTENANCE PROTEIN CFAP97D1"/>
    <property type="match status" value="1"/>
</dbReference>
<dbReference type="Pfam" id="PF13879">
    <property type="entry name" value="Hmw_CFAP97"/>
    <property type="match status" value="1"/>
</dbReference>
<reference key="1">
    <citation type="journal article" date="2005" name="Science">
        <title>The transcriptional landscape of the mammalian genome.</title>
        <authorList>
            <person name="Carninci P."/>
            <person name="Kasukawa T."/>
            <person name="Katayama S."/>
            <person name="Gough J."/>
            <person name="Frith M.C."/>
            <person name="Maeda N."/>
            <person name="Oyama R."/>
            <person name="Ravasi T."/>
            <person name="Lenhard B."/>
            <person name="Wells C."/>
            <person name="Kodzius R."/>
            <person name="Shimokawa K."/>
            <person name="Bajic V.B."/>
            <person name="Brenner S.E."/>
            <person name="Batalov S."/>
            <person name="Forrest A.R."/>
            <person name="Zavolan M."/>
            <person name="Davis M.J."/>
            <person name="Wilming L.G."/>
            <person name="Aidinis V."/>
            <person name="Allen J.E."/>
            <person name="Ambesi-Impiombato A."/>
            <person name="Apweiler R."/>
            <person name="Aturaliya R.N."/>
            <person name="Bailey T.L."/>
            <person name="Bansal M."/>
            <person name="Baxter L."/>
            <person name="Beisel K.W."/>
            <person name="Bersano T."/>
            <person name="Bono H."/>
            <person name="Chalk A.M."/>
            <person name="Chiu K.P."/>
            <person name="Choudhary V."/>
            <person name="Christoffels A."/>
            <person name="Clutterbuck D.R."/>
            <person name="Crowe M.L."/>
            <person name="Dalla E."/>
            <person name="Dalrymple B.P."/>
            <person name="de Bono B."/>
            <person name="Della Gatta G."/>
            <person name="di Bernardo D."/>
            <person name="Down T."/>
            <person name="Engstrom P."/>
            <person name="Fagiolini M."/>
            <person name="Faulkner G."/>
            <person name="Fletcher C.F."/>
            <person name="Fukushima T."/>
            <person name="Furuno M."/>
            <person name="Futaki S."/>
            <person name="Gariboldi M."/>
            <person name="Georgii-Hemming P."/>
            <person name="Gingeras T.R."/>
            <person name="Gojobori T."/>
            <person name="Green R.E."/>
            <person name="Gustincich S."/>
            <person name="Harbers M."/>
            <person name="Hayashi Y."/>
            <person name="Hensch T.K."/>
            <person name="Hirokawa N."/>
            <person name="Hill D."/>
            <person name="Huminiecki L."/>
            <person name="Iacono M."/>
            <person name="Ikeo K."/>
            <person name="Iwama A."/>
            <person name="Ishikawa T."/>
            <person name="Jakt M."/>
            <person name="Kanapin A."/>
            <person name="Katoh M."/>
            <person name="Kawasawa Y."/>
            <person name="Kelso J."/>
            <person name="Kitamura H."/>
            <person name="Kitano H."/>
            <person name="Kollias G."/>
            <person name="Krishnan S.P."/>
            <person name="Kruger A."/>
            <person name="Kummerfeld S.K."/>
            <person name="Kurochkin I.V."/>
            <person name="Lareau L.F."/>
            <person name="Lazarevic D."/>
            <person name="Lipovich L."/>
            <person name="Liu J."/>
            <person name="Liuni S."/>
            <person name="McWilliam S."/>
            <person name="Madan Babu M."/>
            <person name="Madera M."/>
            <person name="Marchionni L."/>
            <person name="Matsuda H."/>
            <person name="Matsuzawa S."/>
            <person name="Miki H."/>
            <person name="Mignone F."/>
            <person name="Miyake S."/>
            <person name="Morris K."/>
            <person name="Mottagui-Tabar S."/>
            <person name="Mulder N."/>
            <person name="Nakano N."/>
            <person name="Nakauchi H."/>
            <person name="Ng P."/>
            <person name="Nilsson R."/>
            <person name="Nishiguchi S."/>
            <person name="Nishikawa S."/>
            <person name="Nori F."/>
            <person name="Ohara O."/>
            <person name="Okazaki Y."/>
            <person name="Orlando V."/>
            <person name="Pang K.C."/>
            <person name="Pavan W.J."/>
            <person name="Pavesi G."/>
            <person name="Pesole G."/>
            <person name="Petrovsky N."/>
            <person name="Piazza S."/>
            <person name="Reed J."/>
            <person name="Reid J.F."/>
            <person name="Ring B.Z."/>
            <person name="Ringwald M."/>
            <person name="Rost B."/>
            <person name="Ruan Y."/>
            <person name="Salzberg S.L."/>
            <person name="Sandelin A."/>
            <person name="Schneider C."/>
            <person name="Schoenbach C."/>
            <person name="Sekiguchi K."/>
            <person name="Semple C.A."/>
            <person name="Seno S."/>
            <person name="Sessa L."/>
            <person name="Sheng Y."/>
            <person name="Shibata Y."/>
            <person name="Shimada H."/>
            <person name="Shimada K."/>
            <person name="Silva D."/>
            <person name="Sinclair B."/>
            <person name="Sperling S."/>
            <person name="Stupka E."/>
            <person name="Sugiura K."/>
            <person name="Sultana R."/>
            <person name="Takenaka Y."/>
            <person name="Taki K."/>
            <person name="Tammoja K."/>
            <person name="Tan S.L."/>
            <person name="Tang S."/>
            <person name="Taylor M.S."/>
            <person name="Tegner J."/>
            <person name="Teichmann S.A."/>
            <person name="Ueda H.R."/>
            <person name="van Nimwegen E."/>
            <person name="Verardo R."/>
            <person name="Wei C.L."/>
            <person name="Yagi K."/>
            <person name="Yamanishi H."/>
            <person name="Zabarovsky E."/>
            <person name="Zhu S."/>
            <person name="Zimmer A."/>
            <person name="Hide W."/>
            <person name="Bult C."/>
            <person name="Grimmond S.M."/>
            <person name="Teasdale R.D."/>
            <person name="Liu E.T."/>
            <person name="Brusic V."/>
            <person name="Quackenbush J."/>
            <person name="Wahlestedt C."/>
            <person name="Mattick J.S."/>
            <person name="Hume D.A."/>
            <person name="Kai C."/>
            <person name="Sasaki D."/>
            <person name="Tomaru Y."/>
            <person name="Fukuda S."/>
            <person name="Kanamori-Katayama M."/>
            <person name="Suzuki M."/>
            <person name="Aoki J."/>
            <person name="Arakawa T."/>
            <person name="Iida J."/>
            <person name="Imamura K."/>
            <person name="Itoh M."/>
            <person name="Kato T."/>
            <person name="Kawaji H."/>
            <person name="Kawagashira N."/>
            <person name="Kawashima T."/>
            <person name="Kojima M."/>
            <person name="Kondo S."/>
            <person name="Konno H."/>
            <person name="Nakano K."/>
            <person name="Ninomiya N."/>
            <person name="Nishio T."/>
            <person name="Okada M."/>
            <person name="Plessy C."/>
            <person name="Shibata K."/>
            <person name="Shiraki T."/>
            <person name="Suzuki S."/>
            <person name="Tagami M."/>
            <person name="Waki K."/>
            <person name="Watahiki A."/>
            <person name="Okamura-Oho Y."/>
            <person name="Suzuki H."/>
            <person name="Kawai J."/>
            <person name="Hayashizaki Y."/>
        </authorList>
    </citation>
    <scope>NUCLEOTIDE SEQUENCE [LARGE SCALE MRNA]</scope>
    <source>
        <strain>C57BL/6J</strain>
        <tissue>Testis</tissue>
    </source>
</reference>
<reference key="2">
    <citation type="journal article" date="2009" name="PLoS Biol.">
        <title>Lineage-specific biology revealed by a finished genome assembly of the mouse.</title>
        <authorList>
            <person name="Church D.M."/>
            <person name="Goodstadt L."/>
            <person name="Hillier L.W."/>
            <person name="Zody M.C."/>
            <person name="Goldstein S."/>
            <person name="She X."/>
            <person name="Bult C.J."/>
            <person name="Agarwala R."/>
            <person name="Cherry J.L."/>
            <person name="DiCuccio M."/>
            <person name="Hlavina W."/>
            <person name="Kapustin Y."/>
            <person name="Meric P."/>
            <person name="Maglott D."/>
            <person name="Birtle Z."/>
            <person name="Marques A.C."/>
            <person name="Graves T."/>
            <person name="Zhou S."/>
            <person name="Teague B."/>
            <person name="Potamousis K."/>
            <person name="Churas C."/>
            <person name="Place M."/>
            <person name="Herschleb J."/>
            <person name="Runnheim R."/>
            <person name="Forrest D."/>
            <person name="Amos-Landgraf J."/>
            <person name="Schwartz D.C."/>
            <person name="Cheng Z."/>
            <person name="Lindblad-Toh K."/>
            <person name="Eichler E.E."/>
            <person name="Ponting C.P."/>
        </authorList>
    </citation>
    <scope>NUCLEOTIDE SEQUENCE [LARGE SCALE GENOMIC DNA]</scope>
    <source>
        <strain>C57BL/6J</strain>
    </source>
</reference>
<reference key="3">
    <citation type="submission" date="2005-07" db="EMBL/GenBank/DDBJ databases">
        <authorList>
            <person name="Mural R.J."/>
            <person name="Adams M.D."/>
            <person name="Myers E.W."/>
            <person name="Smith H.O."/>
            <person name="Venter J.C."/>
        </authorList>
    </citation>
    <scope>NUCLEOTIDE SEQUENCE [LARGE SCALE GENOMIC DNA]</scope>
</reference>
<reference key="4">
    <citation type="journal article" date="2004" name="Genome Res.">
        <title>The status, quality, and expansion of the NIH full-length cDNA project: the Mammalian Gene Collection (MGC).</title>
        <authorList>
            <consortium name="The MGC Project Team"/>
        </authorList>
    </citation>
    <scope>NUCLEOTIDE SEQUENCE [LARGE SCALE MRNA]</scope>
    <source>
        <tissue>Testis</tissue>
    </source>
</reference>
<reference key="5">
    <citation type="journal article" date="2020" name="PLoS Genet.">
        <title>Cfap97d1 is important for flagellar axoneme maintenance and male mouse fertility.</title>
        <authorList>
            <person name="Oura S."/>
            <person name="Kazi S."/>
            <person name="Savolainen A."/>
            <person name="Nozawa K."/>
            <person name="Castaneda J."/>
            <person name="Yu Z."/>
            <person name="Miyata H."/>
            <person name="Matzuk R.M."/>
            <person name="Hansen J.N."/>
            <person name="Wachten D."/>
            <person name="Matzuk M.M."/>
            <person name="Prunskaite-Hyyrylaeinen R."/>
        </authorList>
    </citation>
    <scope>FUNCTION</scope>
    <scope>TISSUE SPECIFICITY</scope>
    <scope>DEVELOPMENTAL STAGE</scope>
    <scope>DISRUPTION PHENOTYPE</scope>
</reference>
<protein>
    <recommendedName>
        <fullName evidence="3">Sperm axonemal maintenance protein CFAP97D1</fullName>
    </recommendedName>
    <alternativeName>
        <fullName>CFAP97 domain-containing protein 1</fullName>
    </alternativeName>
</protein>